<sequence length="456" mass="49568">MPASTSIPETPSKLPDALLVNSDPASKVDNVSVKIEQESPLALEGSPLPTVSDVLPETNNAHEEVSSSSWSLSSSDSIMSYDSLSDDVSVLSFLDCPLTTFETAPSIASFSNSAADVSSHSRSSSSWSAKLSRFTKHASKPSLSSNSSDSSFSKSGSESNALSSRGSFELEPHGIHRHVSRAKRLLSKFYSKFHHKKEDSSFDPLAPLVFAPNTSRVLRVTNEANASAISLEKATSLSSQEQPGSEIKKELSLYDHEFDQILDLAIKAKKDGNLENAIEFLEYIMPEVASQQNFVPYELAELYKQRGTSQDLKSILPLYMLAASLGHDRSSFLVGEAFFYGTYGARENKLRALQYYHLANDKGNADAMLALCKLYLRGLPGHIFPSSRRAFEYAHRAAMLGHAPACYVLGKFYETGVGCVKDLAKSEAGFRAGLINDSPITDADALQIASTLVLLQ</sequence>
<keyword id="KW-0597">Phosphoprotein</keyword>
<keyword id="KW-1185">Reference proteome</keyword>
<keyword id="KW-0677">Repeat</keyword>
<reference key="1">
    <citation type="journal article" date="2002" name="Nature">
        <title>The genome sequence of Schizosaccharomyces pombe.</title>
        <authorList>
            <person name="Wood V."/>
            <person name="Gwilliam R."/>
            <person name="Rajandream M.A."/>
            <person name="Lyne M.H."/>
            <person name="Lyne R."/>
            <person name="Stewart A."/>
            <person name="Sgouros J.G."/>
            <person name="Peat N."/>
            <person name="Hayles J."/>
            <person name="Baker S.G."/>
            <person name="Basham D."/>
            <person name="Bowman S."/>
            <person name="Brooks K."/>
            <person name="Brown D."/>
            <person name="Brown S."/>
            <person name="Chillingworth T."/>
            <person name="Churcher C.M."/>
            <person name="Collins M."/>
            <person name="Connor R."/>
            <person name="Cronin A."/>
            <person name="Davis P."/>
            <person name="Feltwell T."/>
            <person name="Fraser A."/>
            <person name="Gentles S."/>
            <person name="Goble A."/>
            <person name="Hamlin N."/>
            <person name="Harris D.E."/>
            <person name="Hidalgo J."/>
            <person name="Hodgson G."/>
            <person name="Holroyd S."/>
            <person name="Hornsby T."/>
            <person name="Howarth S."/>
            <person name="Huckle E.J."/>
            <person name="Hunt S."/>
            <person name="Jagels K."/>
            <person name="James K.D."/>
            <person name="Jones L."/>
            <person name="Jones M."/>
            <person name="Leather S."/>
            <person name="McDonald S."/>
            <person name="McLean J."/>
            <person name="Mooney P."/>
            <person name="Moule S."/>
            <person name="Mungall K.L."/>
            <person name="Murphy L.D."/>
            <person name="Niblett D."/>
            <person name="Odell C."/>
            <person name="Oliver K."/>
            <person name="O'Neil S."/>
            <person name="Pearson D."/>
            <person name="Quail M.A."/>
            <person name="Rabbinowitsch E."/>
            <person name="Rutherford K.M."/>
            <person name="Rutter S."/>
            <person name="Saunders D."/>
            <person name="Seeger K."/>
            <person name="Sharp S."/>
            <person name="Skelton J."/>
            <person name="Simmonds M.N."/>
            <person name="Squares R."/>
            <person name="Squares S."/>
            <person name="Stevens K."/>
            <person name="Taylor K."/>
            <person name="Taylor R.G."/>
            <person name="Tivey A."/>
            <person name="Walsh S.V."/>
            <person name="Warren T."/>
            <person name="Whitehead S."/>
            <person name="Woodward J.R."/>
            <person name="Volckaert G."/>
            <person name="Aert R."/>
            <person name="Robben J."/>
            <person name="Grymonprez B."/>
            <person name="Weltjens I."/>
            <person name="Vanstreels E."/>
            <person name="Rieger M."/>
            <person name="Schaefer M."/>
            <person name="Mueller-Auer S."/>
            <person name="Gabel C."/>
            <person name="Fuchs M."/>
            <person name="Duesterhoeft A."/>
            <person name="Fritzc C."/>
            <person name="Holzer E."/>
            <person name="Moestl D."/>
            <person name="Hilbert H."/>
            <person name="Borzym K."/>
            <person name="Langer I."/>
            <person name="Beck A."/>
            <person name="Lehrach H."/>
            <person name="Reinhardt R."/>
            <person name="Pohl T.M."/>
            <person name="Eger P."/>
            <person name="Zimmermann W."/>
            <person name="Wedler H."/>
            <person name="Wambutt R."/>
            <person name="Purnelle B."/>
            <person name="Goffeau A."/>
            <person name="Cadieu E."/>
            <person name="Dreano S."/>
            <person name="Gloux S."/>
            <person name="Lelaure V."/>
            <person name="Mottier S."/>
            <person name="Galibert F."/>
            <person name="Aves S.J."/>
            <person name="Xiang Z."/>
            <person name="Hunt C."/>
            <person name="Moore K."/>
            <person name="Hurst S.M."/>
            <person name="Lucas M."/>
            <person name="Rochet M."/>
            <person name="Gaillardin C."/>
            <person name="Tallada V.A."/>
            <person name="Garzon A."/>
            <person name="Thode G."/>
            <person name="Daga R.R."/>
            <person name="Cruzado L."/>
            <person name="Jimenez J."/>
            <person name="Sanchez M."/>
            <person name="del Rey F."/>
            <person name="Benito J."/>
            <person name="Dominguez A."/>
            <person name="Revuelta J.L."/>
            <person name="Moreno S."/>
            <person name="Armstrong J."/>
            <person name="Forsburg S.L."/>
            <person name="Cerutti L."/>
            <person name="Lowe T."/>
            <person name="McCombie W.R."/>
            <person name="Paulsen I."/>
            <person name="Potashkin J."/>
            <person name="Shpakovski G.V."/>
            <person name="Ussery D."/>
            <person name="Barrell B.G."/>
            <person name="Nurse P."/>
        </authorList>
    </citation>
    <scope>NUCLEOTIDE SEQUENCE [LARGE SCALE GENOMIC DNA]</scope>
    <source>
        <strain>972 / ATCC 24843</strain>
    </source>
</reference>
<reference key="2">
    <citation type="journal article" date="2004" name="Yeast">
        <title>Chr4, a Schizosaccharomyces pombe homologue of the Saccharomyces cerevisiae Chs4p/Skt5p protein, is related to septum formation and is required for the proper localization of Chs2.</title>
        <authorList>
            <person name="Matsuo Y."/>
            <person name="Matsuura Y."/>
            <person name="Tanaka K."/>
            <person name="Matsuda H."/>
            <person name="Kawamukai M."/>
        </authorList>
    </citation>
    <scope>IDENTIFICATION</scope>
    <scope>POSSIBLE FUNCTION</scope>
</reference>
<reference key="3">
    <citation type="journal article" date="2008" name="J. Proteome Res.">
        <title>Phosphoproteome analysis of fission yeast.</title>
        <authorList>
            <person name="Wilson-Grady J.T."/>
            <person name="Villen J."/>
            <person name="Gygi S.P."/>
        </authorList>
    </citation>
    <scope>PHOSPHORYLATION [LARGE SCALE ANALYSIS] AT SER-227 AND SER-230</scope>
    <scope>IDENTIFICATION BY MASS SPECTROMETRY</scope>
</reference>
<gene>
    <name type="primary">chr1</name>
    <name type="synonym">cfh4</name>
    <name type="ORF">SPBC3E7.12c</name>
</gene>
<feature type="chain" id="PRO_0000076205" description="Chitin synthase regulatory factor 1">
    <location>
        <begin position="1"/>
        <end position="456"/>
    </location>
</feature>
<feature type="repeat" description="Sel1-like 1">
    <location>
        <begin position="293"/>
        <end position="327"/>
    </location>
</feature>
<feature type="repeat" description="Sel1-like 2">
    <location>
        <begin position="328"/>
        <end position="364"/>
    </location>
</feature>
<feature type="repeat" description="Sel1-like 3">
    <location>
        <begin position="365"/>
        <end position="402"/>
    </location>
</feature>
<feature type="repeat" description="Sel1-like 4">
    <location>
        <begin position="403"/>
        <end position="438"/>
    </location>
</feature>
<feature type="region of interest" description="Disordered" evidence="1">
    <location>
        <begin position="1"/>
        <end position="20"/>
    </location>
</feature>
<feature type="region of interest" description="Disordered" evidence="1">
    <location>
        <begin position="38"/>
        <end position="74"/>
    </location>
</feature>
<feature type="region of interest" description="Disordered" evidence="1">
    <location>
        <begin position="139"/>
        <end position="158"/>
    </location>
</feature>
<feature type="compositionally biased region" description="Low complexity" evidence="1">
    <location>
        <begin position="140"/>
        <end position="158"/>
    </location>
</feature>
<feature type="modified residue" description="Phosphoserine" evidence="2">
    <location>
        <position position="227"/>
    </location>
</feature>
<feature type="modified residue" description="Phosphoserine" evidence="2">
    <location>
        <position position="230"/>
    </location>
</feature>
<proteinExistence type="evidence at protein level"/>
<dbReference type="EMBL" id="CU329671">
    <property type="protein sequence ID" value="CAA19015.1"/>
    <property type="molecule type" value="Genomic_DNA"/>
</dbReference>
<dbReference type="PIR" id="T40386">
    <property type="entry name" value="T40386"/>
</dbReference>
<dbReference type="RefSeq" id="NP_596099.1">
    <property type="nucleotide sequence ID" value="NM_001022015.2"/>
</dbReference>
<dbReference type="SMR" id="O59732"/>
<dbReference type="BioGRID" id="276796">
    <property type="interactions" value="5"/>
</dbReference>
<dbReference type="STRING" id="284812.O59732"/>
<dbReference type="iPTMnet" id="O59732"/>
<dbReference type="PaxDb" id="4896-SPBC3E7.12c.1"/>
<dbReference type="EnsemblFungi" id="SPBC3E7.12c.1">
    <property type="protein sequence ID" value="SPBC3E7.12c.1:pep"/>
    <property type="gene ID" value="SPBC3E7.12c"/>
</dbReference>
<dbReference type="GeneID" id="2540265"/>
<dbReference type="KEGG" id="spo:2540265"/>
<dbReference type="PomBase" id="SPBC3E7.12c"/>
<dbReference type="VEuPathDB" id="FungiDB:SPBC3E7.12c"/>
<dbReference type="eggNOG" id="KOG1550">
    <property type="taxonomic scope" value="Eukaryota"/>
</dbReference>
<dbReference type="HOGENOM" id="CLU_642753_0_0_1"/>
<dbReference type="InParanoid" id="O59732"/>
<dbReference type="OMA" id="AFEYAHR"/>
<dbReference type="PRO" id="PR:O59732"/>
<dbReference type="Proteomes" id="UP000002485">
    <property type="component" value="Chromosome II"/>
</dbReference>
<dbReference type="GO" id="GO:0005829">
    <property type="term" value="C:cytosol"/>
    <property type="evidence" value="ECO:0007005"/>
    <property type="project" value="PomBase"/>
</dbReference>
<dbReference type="GO" id="GO:0008047">
    <property type="term" value="F:enzyme activator activity"/>
    <property type="evidence" value="ECO:0000318"/>
    <property type="project" value="GO_Central"/>
</dbReference>
<dbReference type="GO" id="GO:0006031">
    <property type="term" value="P:chitin biosynthetic process"/>
    <property type="evidence" value="ECO:0000318"/>
    <property type="project" value="GO_Central"/>
</dbReference>
<dbReference type="GO" id="GO:0031505">
    <property type="term" value="P:fungal-type cell wall organization"/>
    <property type="evidence" value="ECO:0000318"/>
    <property type="project" value="GO_Central"/>
</dbReference>
<dbReference type="Gene3D" id="1.25.40.10">
    <property type="entry name" value="Tetratricopeptide repeat domain"/>
    <property type="match status" value="1"/>
</dbReference>
<dbReference type="InterPro" id="IPR051726">
    <property type="entry name" value="Chitin_Synth_Reg"/>
</dbReference>
<dbReference type="InterPro" id="IPR006597">
    <property type="entry name" value="Sel1-like"/>
</dbReference>
<dbReference type="InterPro" id="IPR011990">
    <property type="entry name" value="TPR-like_helical_dom_sf"/>
</dbReference>
<dbReference type="PANTHER" id="PTHR46430:SF1">
    <property type="entry name" value="CHITIN SYNTHASE REGULATOR SKT5-RELATED"/>
    <property type="match status" value="1"/>
</dbReference>
<dbReference type="PANTHER" id="PTHR46430">
    <property type="entry name" value="PROTEIN SKT5-RELATED"/>
    <property type="match status" value="1"/>
</dbReference>
<dbReference type="Pfam" id="PF08238">
    <property type="entry name" value="Sel1"/>
    <property type="match status" value="3"/>
</dbReference>
<dbReference type="SMART" id="SM00671">
    <property type="entry name" value="SEL1"/>
    <property type="match status" value="4"/>
</dbReference>
<dbReference type="SUPFAM" id="SSF81901">
    <property type="entry name" value="HCP-like"/>
    <property type="match status" value="1"/>
</dbReference>
<name>CHR1_SCHPO</name>
<organism>
    <name type="scientific">Schizosaccharomyces pombe (strain 972 / ATCC 24843)</name>
    <name type="common">Fission yeast</name>
    <dbReference type="NCBI Taxonomy" id="284812"/>
    <lineage>
        <taxon>Eukaryota</taxon>
        <taxon>Fungi</taxon>
        <taxon>Dikarya</taxon>
        <taxon>Ascomycota</taxon>
        <taxon>Taphrinomycotina</taxon>
        <taxon>Schizosaccharomycetes</taxon>
        <taxon>Schizosaccharomycetales</taxon>
        <taxon>Schizosaccharomycetaceae</taxon>
        <taxon>Schizosaccharomyces</taxon>
    </lineage>
</organism>
<protein>
    <recommendedName>
        <fullName>Chitin synthase regulatory factor 1</fullName>
    </recommendedName>
    <alternativeName>
        <fullName>Chs four homolog 4</fullName>
    </alternativeName>
</protein>
<comment type="function">
    <text evidence="3">Involved in chitin biosynthesis.</text>
</comment>
<evidence type="ECO:0000256" key="1">
    <source>
        <dbReference type="SAM" id="MobiDB-lite"/>
    </source>
</evidence>
<evidence type="ECO:0000269" key="2">
    <source>
    </source>
</evidence>
<evidence type="ECO:0000305" key="3"/>
<accession>O59732</accession>